<comment type="function">
    <text evidence="1">Inhibits various C1 cysteine proteases including cathepsin L, papain and cathepsin B. This protein has no toxic activity and its function in the venom is unknown. It may play a role as a housekeeping or regulatory protein (By similarity).</text>
</comment>
<comment type="subcellular location">
    <subcellularLocation>
        <location>Secreted</location>
    </subcellularLocation>
</comment>
<comment type="tissue specificity">
    <text evidence="3">Expressed at a low level by the venom gland (at protein level).</text>
</comment>
<comment type="miscellaneous">
    <text evidence="1">Negative results: the recombinant protein does not inhibit calpain-1 (CAPN1), a C2 family cysteine protease and legumain (LGMN), a C13 family cysteine protease. Does not provoke cell death (PC3 prostrate cancer cells) (By similarity).</text>
</comment>
<comment type="similarity">
    <text evidence="2">Belongs to the cystatin family.</text>
</comment>
<proteinExistence type="evidence at protein level"/>
<feature type="signal peptide" evidence="1">
    <location>
        <begin position="1"/>
        <end position="26"/>
    </location>
</feature>
<feature type="chain" id="PRO_5000654419" description="Cystatin">
    <location>
        <begin position="27"/>
        <end position="141"/>
    </location>
</feature>
<feature type="domain" description="Cystatin">
    <location>
        <begin position="29"/>
        <end position="129"/>
    </location>
</feature>
<feature type="short sequence motif" description="Secondary area of contact" evidence="1">
    <location>
        <begin position="73"/>
        <end position="77"/>
    </location>
</feature>
<feature type="site" description="Reactive site" evidence="1">
    <location>
        <position position="29"/>
    </location>
</feature>
<feature type="disulfide bond" evidence="1">
    <location>
        <begin position="91"/>
        <end position="107"/>
    </location>
</feature>
<feature type="disulfide bond" evidence="1">
    <location>
        <begin position="120"/>
        <end position="140"/>
    </location>
</feature>
<sequence length="141" mass="15763">MVHSQLPVAGPLRLLCALLLLPSATMIPGGLSPRSVTDPDVQEAAEFAVQEYNALSANAYYYKQLRIVEAQSQVVSGAKYYLTMELMKTKCAKTTGKPKVYKEIQNCELPPKAQQEKLTCHFQVWSRPWLGKIELTKMSCN</sequence>
<protein>
    <recommendedName>
        <fullName>Cystatin</fullName>
    </recommendedName>
</protein>
<evidence type="ECO:0000250" key="1"/>
<evidence type="ECO:0000305" key="2"/>
<evidence type="ECO:0000305" key="3">
    <source>
    </source>
</evidence>
<name>CYT_PSEAU</name>
<accession>E3P6N8</accession>
<organism>
    <name type="scientific">Pseudechis australis</name>
    <name type="common">Mulga snake</name>
    <name type="synonym">King brown snake</name>
    <dbReference type="NCBI Taxonomy" id="8670"/>
    <lineage>
        <taxon>Eukaryota</taxon>
        <taxon>Metazoa</taxon>
        <taxon>Chordata</taxon>
        <taxon>Craniata</taxon>
        <taxon>Vertebrata</taxon>
        <taxon>Euteleostomi</taxon>
        <taxon>Lepidosauria</taxon>
        <taxon>Squamata</taxon>
        <taxon>Bifurcata</taxon>
        <taxon>Unidentata</taxon>
        <taxon>Episquamata</taxon>
        <taxon>Toxicofera</taxon>
        <taxon>Serpentes</taxon>
        <taxon>Colubroidea</taxon>
        <taxon>Elapidae</taxon>
        <taxon>Hydrophiinae</taxon>
        <taxon>Pseudechis</taxon>
    </lineage>
</organism>
<dbReference type="EMBL" id="FJ411283">
    <property type="protein sequence ID" value="ACR83844.1"/>
    <property type="molecule type" value="mRNA"/>
</dbReference>
<dbReference type="SMR" id="E3P6N8"/>
<dbReference type="MEROPS" id="I25.012"/>
<dbReference type="GO" id="GO:0070062">
    <property type="term" value="C:extracellular exosome"/>
    <property type="evidence" value="ECO:0007669"/>
    <property type="project" value="TreeGrafter"/>
</dbReference>
<dbReference type="GO" id="GO:0004869">
    <property type="term" value="F:cysteine-type endopeptidase inhibitor activity"/>
    <property type="evidence" value="ECO:0007669"/>
    <property type="project" value="UniProtKB-KW"/>
</dbReference>
<dbReference type="CDD" id="cd00042">
    <property type="entry name" value="CY"/>
    <property type="match status" value="1"/>
</dbReference>
<dbReference type="FunFam" id="3.10.450.10:FF:000004">
    <property type="entry name" value="Cystatin C"/>
    <property type="match status" value="1"/>
</dbReference>
<dbReference type="Gene3D" id="3.10.450.10">
    <property type="match status" value="1"/>
</dbReference>
<dbReference type="InterPro" id="IPR000010">
    <property type="entry name" value="Cystatin_dom"/>
</dbReference>
<dbReference type="InterPro" id="IPR046350">
    <property type="entry name" value="Cystatin_sf"/>
</dbReference>
<dbReference type="InterPro" id="IPR018073">
    <property type="entry name" value="Prot_inh_cystat_CS"/>
</dbReference>
<dbReference type="PANTHER" id="PTHR47033">
    <property type="entry name" value="CYSTATIN-M"/>
    <property type="match status" value="1"/>
</dbReference>
<dbReference type="PANTHER" id="PTHR47033:SF1">
    <property type="entry name" value="CYSTATIN-M"/>
    <property type="match status" value="1"/>
</dbReference>
<dbReference type="Pfam" id="PF00031">
    <property type="entry name" value="Cystatin"/>
    <property type="match status" value="1"/>
</dbReference>
<dbReference type="SMART" id="SM00043">
    <property type="entry name" value="CY"/>
    <property type="match status" value="1"/>
</dbReference>
<dbReference type="SUPFAM" id="SSF54403">
    <property type="entry name" value="Cystatin/monellin"/>
    <property type="match status" value="1"/>
</dbReference>
<dbReference type="PROSITE" id="PS00287">
    <property type="entry name" value="CYSTATIN"/>
    <property type="match status" value="1"/>
</dbReference>
<keyword id="KW-1015">Disulfide bond</keyword>
<keyword id="KW-0646">Protease inhibitor</keyword>
<keyword id="KW-0964">Secreted</keyword>
<keyword id="KW-0732">Signal</keyword>
<keyword id="KW-0789">Thiol protease inhibitor</keyword>
<reference key="1">
    <citation type="journal article" date="2011" name="Biochimie">
        <title>Cloning and characterisation of novel cystatins from elapid snake venom glands.</title>
        <authorList>
            <person name="Richards R."/>
            <person name="St Pierre L."/>
            <person name="Trabi M."/>
            <person name="Johnson L.A."/>
            <person name="de Jersey J."/>
            <person name="Masci P.P."/>
            <person name="Lavin M.F."/>
        </authorList>
    </citation>
    <scope>NUCLEOTIDE SEQUENCE [MRNA]</scope>
    <scope>LEVEL OF PROTEIN EXPRESSION</scope>
    <source>
        <tissue>Venom</tissue>
        <tissue>Venom gland</tissue>
    </source>
</reference>